<protein>
    <recommendedName>
        <fullName evidence="1">Methionyl-tRNA formyltransferase</fullName>
        <ecNumber evidence="1">2.1.2.9</ecNumber>
    </recommendedName>
</protein>
<sequence>MKLVFCGTPAFAVPTLEALLQAGHDVALVVTQPDRPSGRGMQVLAPPVKQTALAAGLPVVQPEKIKNNLEFRAQLEAIAPDAIIVVAYGRIIPKWMLDLPRYGNLNLHASLLPKYRGAAPIQWAVAMGETVTGATTMRIDEGLDTGDMLLQDEMEIPPAMTAEELFPLLAEMGAPLMVETLAGLEQGTVTPQKQDEAQATLAPILTREDGRVDFARSAAEIYNRWRGFQPWPGAWTMLGGKKLTLHRMLLAEREDRAEPGMVRVHAGRLFFACGDGGWLEIAELQLEGKKRMPVTDFLRGNTLAPETRLGA</sequence>
<feature type="chain" id="PRO_1000189998" description="Methionyl-tRNA formyltransferase">
    <location>
        <begin position="1"/>
        <end position="311"/>
    </location>
</feature>
<feature type="binding site" evidence="1">
    <location>
        <begin position="110"/>
        <end position="113"/>
    </location>
    <ligand>
        <name>(6S)-5,6,7,8-tetrahydrofolate</name>
        <dbReference type="ChEBI" id="CHEBI:57453"/>
    </ligand>
</feature>
<evidence type="ECO:0000255" key="1">
    <source>
        <dbReference type="HAMAP-Rule" id="MF_00182"/>
    </source>
</evidence>
<accession>C1F542</accession>
<gene>
    <name evidence="1" type="primary">fmt</name>
    <name type="ordered locus">ACP_3129</name>
</gene>
<reference key="1">
    <citation type="journal article" date="2009" name="Appl. Environ. Microbiol.">
        <title>Three genomes from the phylum Acidobacteria provide insight into the lifestyles of these microorganisms in soils.</title>
        <authorList>
            <person name="Ward N.L."/>
            <person name="Challacombe J.F."/>
            <person name="Janssen P.H."/>
            <person name="Henrissat B."/>
            <person name="Coutinho P.M."/>
            <person name="Wu M."/>
            <person name="Xie G."/>
            <person name="Haft D.H."/>
            <person name="Sait M."/>
            <person name="Badger J."/>
            <person name="Barabote R.D."/>
            <person name="Bradley B."/>
            <person name="Brettin T.S."/>
            <person name="Brinkac L.M."/>
            <person name="Bruce D."/>
            <person name="Creasy T."/>
            <person name="Daugherty S.C."/>
            <person name="Davidsen T.M."/>
            <person name="DeBoy R.T."/>
            <person name="Detter J.C."/>
            <person name="Dodson R.J."/>
            <person name="Durkin A.S."/>
            <person name="Ganapathy A."/>
            <person name="Gwinn-Giglio M."/>
            <person name="Han C.S."/>
            <person name="Khouri H."/>
            <person name="Kiss H."/>
            <person name="Kothari S.P."/>
            <person name="Madupu R."/>
            <person name="Nelson K.E."/>
            <person name="Nelson W.C."/>
            <person name="Paulsen I."/>
            <person name="Penn K."/>
            <person name="Ren Q."/>
            <person name="Rosovitz M.J."/>
            <person name="Selengut J.D."/>
            <person name="Shrivastava S."/>
            <person name="Sullivan S.A."/>
            <person name="Tapia R."/>
            <person name="Thompson L.S."/>
            <person name="Watkins K.L."/>
            <person name="Yang Q."/>
            <person name="Yu C."/>
            <person name="Zafar N."/>
            <person name="Zhou L."/>
            <person name="Kuske C.R."/>
        </authorList>
    </citation>
    <scope>NUCLEOTIDE SEQUENCE [LARGE SCALE GENOMIC DNA]</scope>
    <source>
        <strain>ATCC 51196 / DSM 11244 / BCRC 80197 / JCM 7670 / NBRC 15755 / NCIMB 13165 / 161</strain>
    </source>
</reference>
<dbReference type="EC" id="2.1.2.9" evidence="1"/>
<dbReference type="EMBL" id="CP001472">
    <property type="protein sequence ID" value="ACO34393.1"/>
    <property type="molecule type" value="Genomic_DNA"/>
</dbReference>
<dbReference type="RefSeq" id="WP_015898175.1">
    <property type="nucleotide sequence ID" value="NC_012483.1"/>
</dbReference>
<dbReference type="SMR" id="C1F542"/>
<dbReference type="FunCoup" id="C1F542">
    <property type="interactions" value="506"/>
</dbReference>
<dbReference type="STRING" id="240015.ACP_3129"/>
<dbReference type="KEGG" id="aca:ACP_3129"/>
<dbReference type="eggNOG" id="COG0223">
    <property type="taxonomic scope" value="Bacteria"/>
</dbReference>
<dbReference type="HOGENOM" id="CLU_033347_1_1_0"/>
<dbReference type="InParanoid" id="C1F542"/>
<dbReference type="OrthoDB" id="9802815at2"/>
<dbReference type="Proteomes" id="UP000002207">
    <property type="component" value="Chromosome"/>
</dbReference>
<dbReference type="GO" id="GO:0005829">
    <property type="term" value="C:cytosol"/>
    <property type="evidence" value="ECO:0007669"/>
    <property type="project" value="TreeGrafter"/>
</dbReference>
<dbReference type="GO" id="GO:0004479">
    <property type="term" value="F:methionyl-tRNA formyltransferase activity"/>
    <property type="evidence" value="ECO:0007669"/>
    <property type="project" value="UniProtKB-UniRule"/>
</dbReference>
<dbReference type="CDD" id="cd08646">
    <property type="entry name" value="FMT_core_Met-tRNA-FMT_N"/>
    <property type="match status" value="1"/>
</dbReference>
<dbReference type="CDD" id="cd08704">
    <property type="entry name" value="Met_tRNA_FMT_C"/>
    <property type="match status" value="1"/>
</dbReference>
<dbReference type="FunFam" id="3.40.50.12230:FF:000001">
    <property type="entry name" value="Methionyl-tRNA formyltransferase"/>
    <property type="match status" value="1"/>
</dbReference>
<dbReference type="Gene3D" id="3.40.50.12230">
    <property type="match status" value="1"/>
</dbReference>
<dbReference type="HAMAP" id="MF_00182">
    <property type="entry name" value="Formyl_trans"/>
    <property type="match status" value="1"/>
</dbReference>
<dbReference type="InterPro" id="IPR005794">
    <property type="entry name" value="Fmt"/>
</dbReference>
<dbReference type="InterPro" id="IPR005793">
    <property type="entry name" value="Formyl_trans_C"/>
</dbReference>
<dbReference type="InterPro" id="IPR002376">
    <property type="entry name" value="Formyl_transf_N"/>
</dbReference>
<dbReference type="InterPro" id="IPR036477">
    <property type="entry name" value="Formyl_transf_N_sf"/>
</dbReference>
<dbReference type="InterPro" id="IPR011034">
    <property type="entry name" value="Formyl_transferase-like_C_sf"/>
</dbReference>
<dbReference type="InterPro" id="IPR044135">
    <property type="entry name" value="Met-tRNA-FMT_C"/>
</dbReference>
<dbReference type="InterPro" id="IPR041711">
    <property type="entry name" value="Met-tRNA-FMT_N"/>
</dbReference>
<dbReference type="NCBIfam" id="TIGR00460">
    <property type="entry name" value="fmt"/>
    <property type="match status" value="1"/>
</dbReference>
<dbReference type="PANTHER" id="PTHR11138">
    <property type="entry name" value="METHIONYL-TRNA FORMYLTRANSFERASE"/>
    <property type="match status" value="1"/>
</dbReference>
<dbReference type="PANTHER" id="PTHR11138:SF5">
    <property type="entry name" value="METHIONYL-TRNA FORMYLTRANSFERASE, MITOCHONDRIAL"/>
    <property type="match status" value="1"/>
</dbReference>
<dbReference type="Pfam" id="PF02911">
    <property type="entry name" value="Formyl_trans_C"/>
    <property type="match status" value="1"/>
</dbReference>
<dbReference type="Pfam" id="PF00551">
    <property type="entry name" value="Formyl_trans_N"/>
    <property type="match status" value="1"/>
</dbReference>
<dbReference type="SUPFAM" id="SSF50486">
    <property type="entry name" value="FMT C-terminal domain-like"/>
    <property type="match status" value="1"/>
</dbReference>
<dbReference type="SUPFAM" id="SSF53328">
    <property type="entry name" value="Formyltransferase"/>
    <property type="match status" value="1"/>
</dbReference>
<name>FMT_ACIC5</name>
<organism>
    <name type="scientific">Acidobacterium capsulatum (strain ATCC 51196 / DSM 11244 / BCRC 80197 / JCM 7670 / NBRC 15755 / NCIMB 13165 / 161)</name>
    <dbReference type="NCBI Taxonomy" id="240015"/>
    <lineage>
        <taxon>Bacteria</taxon>
        <taxon>Pseudomonadati</taxon>
        <taxon>Acidobacteriota</taxon>
        <taxon>Terriglobia</taxon>
        <taxon>Terriglobales</taxon>
        <taxon>Acidobacteriaceae</taxon>
        <taxon>Acidobacterium</taxon>
    </lineage>
</organism>
<comment type="function">
    <text evidence="1">Attaches a formyl group to the free amino group of methionyl-tRNA(fMet). The formyl group appears to play a dual role in the initiator identity of N-formylmethionyl-tRNA by promoting its recognition by IF2 and preventing the misappropriation of this tRNA by the elongation apparatus.</text>
</comment>
<comment type="catalytic activity">
    <reaction evidence="1">
        <text>L-methionyl-tRNA(fMet) + (6R)-10-formyltetrahydrofolate = N-formyl-L-methionyl-tRNA(fMet) + (6S)-5,6,7,8-tetrahydrofolate + H(+)</text>
        <dbReference type="Rhea" id="RHEA:24380"/>
        <dbReference type="Rhea" id="RHEA-COMP:9952"/>
        <dbReference type="Rhea" id="RHEA-COMP:9953"/>
        <dbReference type="ChEBI" id="CHEBI:15378"/>
        <dbReference type="ChEBI" id="CHEBI:57453"/>
        <dbReference type="ChEBI" id="CHEBI:78530"/>
        <dbReference type="ChEBI" id="CHEBI:78844"/>
        <dbReference type="ChEBI" id="CHEBI:195366"/>
        <dbReference type="EC" id="2.1.2.9"/>
    </reaction>
</comment>
<comment type="similarity">
    <text evidence="1">Belongs to the Fmt family.</text>
</comment>
<proteinExistence type="inferred from homology"/>
<keyword id="KW-0648">Protein biosynthesis</keyword>
<keyword id="KW-1185">Reference proteome</keyword>
<keyword id="KW-0808">Transferase</keyword>